<keyword id="KW-0687">Ribonucleoprotein</keyword>
<keyword id="KW-0689">Ribosomal protein</keyword>
<keyword id="KW-0694">RNA-binding</keyword>
<keyword id="KW-0699">rRNA-binding</keyword>
<sequence length="179" mass="19688">MSRIGYKTIVIPEGVTVTRDEDVITVKGPKGELSETFSPDVAMNVNGNEINFEPTGKYDNKMCALHGTQRANLANMIEGVEKGFNKTLKLVGVGYRTQLKGSDLILNVGYSNPVDVKVPEDIDVKVPDNTTIEIAGINKQHVGDFAAKVREIRSPEPYKGKGIRYENEHITLREGKTGK</sequence>
<comment type="function">
    <text evidence="1">This protein binds to the 23S rRNA, and is important in its secondary structure. It is located near the subunit interface in the base of the L7/L12 stalk, and near the tRNA binding site of the peptidyltransferase center.</text>
</comment>
<comment type="subunit">
    <text evidence="1">Part of the 50S ribosomal subunit.</text>
</comment>
<comment type="induction">
    <text evidence="2">Expression is induced 2 fold by treatment at 45 MPa for 30 minutes.</text>
</comment>
<comment type="similarity">
    <text evidence="1">Belongs to the universal ribosomal protein uL6 family.</text>
</comment>
<feature type="chain" id="PRO_0000260884" description="Large ribosomal subunit protein uL6">
    <location>
        <begin position="1"/>
        <end position="179"/>
    </location>
</feature>
<evidence type="ECO:0000255" key="1">
    <source>
        <dbReference type="HAMAP-Rule" id="MF_01365"/>
    </source>
</evidence>
<evidence type="ECO:0000269" key="2">
    <source>
    </source>
</evidence>
<evidence type="ECO:0000305" key="3"/>
<gene>
    <name evidence="1" type="primary">rplF</name>
</gene>
<reference key="1">
    <citation type="journal article" date="2005" name="Arch. Microbiol.">
        <title>Transcriptional response reveals translation machinery as target for high pressure in Lactobacillus sanfranciscensis.</title>
        <authorList>
            <person name="Pavlovic M."/>
            <person name="Hoermann S."/>
            <person name="Vogel R.F."/>
            <person name="Ehrmann M.A."/>
        </authorList>
    </citation>
    <scope>NUCLEOTIDE SEQUENCE [GENOMIC DNA]</scope>
    <scope>INDUCTION BY HIGH PRESSURE</scope>
    <source>
        <strain>ATCC 27651 / DSM 20451 / JCM 5668 / KCTC 3205 / NCIMB 702811 / NRRL B-3934 / L-12</strain>
    </source>
</reference>
<protein>
    <recommendedName>
        <fullName evidence="1">Large ribosomal subunit protein uL6</fullName>
    </recommendedName>
    <alternativeName>
        <fullName evidence="3">50S ribosomal protein L6</fullName>
    </alternativeName>
</protein>
<dbReference type="EMBL" id="AY912116">
    <property type="protein sequence ID" value="AAX93325.1"/>
    <property type="molecule type" value="Genomic_DNA"/>
</dbReference>
<dbReference type="RefSeq" id="WP_056957912.1">
    <property type="nucleotide sequence ID" value="NZ_QRFO01000043.1"/>
</dbReference>
<dbReference type="SMR" id="Q2YEI7"/>
<dbReference type="GO" id="GO:0022625">
    <property type="term" value="C:cytosolic large ribosomal subunit"/>
    <property type="evidence" value="ECO:0007669"/>
    <property type="project" value="TreeGrafter"/>
</dbReference>
<dbReference type="GO" id="GO:0019843">
    <property type="term" value="F:rRNA binding"/>
    <property type="evidence" value="ECO:0007669"/>
    <property type="project" value="UniProtKB-UniRule"/>
</dbReference>
<dbReference type="GO" id="GO:0003735">
    <property type="term" value="F:structural constituent of ribosome"/>
    <property type="evidence" value="ECO:0007669"/>
    <property type="project" value="InterPro"/>
</dbReference>
<dbReference type="GO" id="GO:0002181">
    <property type="term" value="P:cytoplasmic translation"/>
    <property type="evidence" value="ECO:0007669"/>
    <property type="project" value="TreeGrafter"/>
</dbReference>
<dbReference type="FunFam" id="3.90.930.12:FF:000001">
    <property type="entry name" value="50S ribosomal protein L6"/>
    <property type="match status" value="1"/>
</dbReference>
<dbReference type="Gene3D" id="3.90.930.12">
    <property type="entry name" value="Ribosomal protein L6, alpha-beta domain"/>
    <property type="match status" value="2"/>
</dbReference>
<dbReference type="HAMAP" id="MF_01365_B">
    <property type="entry name" value="Ribosomal_uL6_B"/>
    <property type="match status" value="1"/>
</dbReference>
<dbReference type="InterPro" id="IPR000702">
    <property type="entry name" value="Ribosomal_uL6-like"/>
</dbReference>
<dbReference type="InterPro" id="IPR036789">
    <property type="entry name" value="Ribosomal_uL6-like_a/b-dom_sf"/>
</dbReference>
<dbReference type="InterPro" id="IPR020040">
    <property type="entry name" value="Ribosomal_uL6_a/b-dom"/>
</dbReference>
<dbReference type="InterPro" id="IPR019906">
    <property type="entry name" value="Ribosomal_uL6_bac-type"/>
</dbReference>
<dbReference type="InterPro" id="IPR002358">
    <property type="entry name" value="Ribosomal_uL6_CS"/>
</dbReference>
<dbReference type="NCBIfam" id="TIGR03654">
    <property type="entry name" value="L6_bact"/>
    <property type="match status" value="1"/>
</dbReference>
<dbReference type="PANTHER" id="PTHR11655">
    <property type="entry name" value="60S/50S RIBOSOMAL PROTEIN L6/L9"/>
    <property type="match status" value="1"/>
</dbReference>
<dbReference type="PANTHER" id="PTHR11655:SF14">
    <property type="entry name" value="LARGE RIBOSOMAL SUBUNIT PROTEIN UL6M"/>
    <property type="match status" value="1"/>
</dbReference>
<dbReference type="Pfam" id="PF00347">
    <property type="entry name" value="Ribosomal_L6"/>
    <property type="match status" value="2"/>
</dbReference>
<dbReference type="PIRSF" id="PIRSF002162">
    <property type="entry name" value="Ribosomal_L6"/>
    <property type="match status" value="1"/>
</dbReference>
<dbReference type="PRINTS" id="PR00059">
    <property type="entry name" value="RIBOSOMALL6"/>
</dbReference>
<dbReference type="SUPFAM" id="SSF56053">
    <property type="entry name" value="Ribosomal protein L6"/>
    <property type="match status" value="2"/>
</dbReference>
<dbReference type="PROSITE" id="PS00525">
    <property type="entry name" value="RIBOSOMAL_L6_1"/>
    <property type="match status" value="1"/>
</dbReference>
<accession>Q2YEI7</accession>
<name>RL6_FRUSA</name>
<organism>
    <name type="scientific">Fructilactobacillus sanfranciscensis</name>
    <name type="common">Lactobacillus sanfranciscensis</name>
    <dbReference type="NCBI Taxonomy" id="1625"/>
    <lineage>
        <taxon>Bacteria</taxon>
        <taxon>Bacillati</taxon>
        <taxon>Bacillota</taxon>
        <taxon>Bacilli</taxon>
        <taxon>Lactobacillales</taxon>
        <taxon>Lactobacillaceae</taxon>
        <taxon>Fructilactobacillus</taxon>
    </lineage>
</organism>
<proteinExistence type="evidence at transcript level"/>